<dbReference type="EC" id="2.7.11.-" evidence="1"/>
<dbReference type="EC" id="2.7.4.-" evidence="1"/>
<dbReference type="EMBL" id="AE017180">
    <property type="protein sequence ID" value="AAR35261.2"/>
    <property type="molecule type" value="Genomic_DNA"/>
</dbReference>
<dbReference type="RefSeq" id="NP_952934.2">
    <property type="nucleotide sequence ID" value="NC_002939.5"/>
</dbReference>
<dbReference type="RefSeq" id="WP_010942530.1">
    <property type="nucleotide sequence ID" value="NC_002939.5"/>
</dbReference>
<dbReference type="SMR" id="P61323"/>
<dbReference type="STRING" id="243231.GSU1885"/>
<dbReference type="EnsemblBacteria" id="AAR35261">
    <property type="protein sequence ID" value="AAR35261"/>
    <property type="gene ID" value="GSU1885"/>
</dbReference>
<dbReference type="KEGG" id="gsu:GSU1885"/>
<dbReference type="PATRIC" id="fig|243231.5.peg.1923"/>
<dbReference type="eggNOG" id="COG1493">
    <property type="taxonomic scope" value="Bacteria"/>
</dbReference>
<dbReference type="HOGENOM" id="CLU_052030_0_1_7"/>
<dbReference type="InParanoid" id="P61323"/>
<dbReference type="OrthoDB" id="9778803at2"/>
<dbReference type="Proteomes" id="UP000000577">
    <property type="component" value="Chromosome"/>
</dbReference>
<dbReference type="GO" id="GO:0005829">
    <property type="term" value="C:cytosol"/>
    <property type="evidence" value="ECO:0000318"/>
    <property type="project" value="GO_Central"/>
</dbReference>
<dbReference type="GO" id="GO:0005524">
    <property type="term" value="F:ATP binding"/>
    <property type="evidence" value="ECO:0007669"/>
    <property type="project" value="UniProtKB-UniRule"/>
</dbReference>
<dbReference type="GO" id="GO:0000287">
    <property type="term" value="F:magnesium ion binding"/>
    <property type="evidence" value="ECO:0007669"/>
    <property type="project" value="UniProtKB-UniRule"/>
</dbReference>
<dbReference type="GO" id="GO:0000155">
    <property type="term" value="F:phosphorelay sensor kinase activity"/>
    <property type="evidence" value="ECO:0007669"/>
    <property type="project" value="InterPro"/>
</dbReference>
<dbReference type="GO" id="GO:0004674">
    <property type="term" value="F:protein serine/threonine kinase activity"/>
    <property type="evidence" value="ECO:0007669"/>
    <property type="project" value="UniProtKB-KW"/>
</dbReference>
<dbReference type="GO" id="GO:0004712">
    <property type="term" value="F:protein serine/threonine/tyrosine kinase activity"/>
    <property type="evidence" value="ECO:0007669"/>
    <property type="project" value="UniProtKB-UniRule"/>
</dbReference>
<dbReference type="GO" id="GO:0006109">
    <property type="term" value="P:regulation of carbohydrate metabolic process"/>
    <property type="evidence" value="ECO:0007669"/>
    <property type="project" value="UniProtKB-UniRule"/>
</dbReference>
<dbReference type="CDD" id="cd01918">
    <property type="entry name" value="HprK_C"/>
    <property type="match status" value="1"/>
</dbReference>
<dbReference type="FunFam" id="3.40.50.300:FF:000174">
    <property type="entry name" value="HPr kinase/phosphorylase"/>
    <property type="match status" value="1"/>
</dbReference>
<dbReference type="Gene3D" id="3.40.1390.20">
    <property type="entry name" value="HprK N-terminal domain-like"/>
    <property type="match status" value="1"/>
</dbReference>
<dbReference type="Gene3D" id="3.40.50.300">
    <property type="entry name" value="P-loop containing nucleotide triphosphate hydrolases"/>
    <property type="match status" value="1"/>
</dbReference>
<dbReference type="HAMAP" id="MF_01249">
    <property type="entry name" value="HPr_kinase"/>
    <property type="match status" value="1"/>
</dbReference>
<dbReference type="InterPro" id="IPR003755">
    <property type="entry name" value="HPr(Ser)_kin/Pase"/>
</dbReference>
<dbReference type="InterPro" id="IPR011104">
    <property type="entry name" value="Hpr_kin/Pase_C"/>
</dbReference>
<dbReference type="InterPro" id="IPR011126">
    <property type="entry name" value="Hpr_kin/Pase_Hpr_N"/>
</dbReference>
<dbReference type="InterPro" id="IPR027417">
    <property type="entry name" value="P-loop_NTPase"/>
</dbReference>
<dbReference type="InterPro" id="IPR028979">
    <property type="entry name" value="Ser_kin/Pase_Hpr-like_N_sf"/>
</dbReference>
<dbReference type="NCBIfam" id="TIGR00679">
    <property type="entry name" value="hpr-ser"/>
    <property type="match status" value="1"/>
</dbReference>
<dbReference type="PANTHER" id="PTHR30305:SF1">
    <property type="entry name" value="HPR KINASE_PHOSPHORYLASE"/>
    <property type="match status" value="1"/>
</dbReference>
<dbReference type="PANTHER" id="PTHR30305">
    <property type="entry name" value="PROTEIN YJDM-RELATED"/>
    <property type="match status" value="1"/>
</dbReference>
<dbReference type="Pfam" id="PF07475">
    <property type="entry name" value="Hpr_kinase_C"/>
    <property type="match status" value="1"/>
</dbReference>
<dbReference type="Pfam" id="PF02603">
    <property type="entry name" value="Hpr_kinase_N"/>
    <property type="match status" value="1"/>
</dbReference>
<dbReference type="SUPFAM" id="SSF75138">
    <property type="entry name" value="HprK N-terminal domain-like"/>
    <property type="match status" value="1"/>
</dbReference>
<dbReference type="SUPFAM" id="SSF53795">
    <property type="entry name" value="PEP carboxykinase-like"/>
    <property type="match status" value="1"/>
</dbReference>
<keyword id="KW-0067">ATP-binding</keyword>
<keyword id="KW-0418">Kinase</keyword>
<keyword id="KW-0460">Magnesium</keyword>
<keyword id="KW-0479">Metal-binding</keyword>
<keyword id="KW-0511">Multifunctional enzyme</keyword>
<keyword id="KW-0547">Nucleotide-binding</keyword>
<keyword id="KW-1185">Reference proteome</keyword>
<keyword id="KW-0723">Serine/threonine-protein kinase</keyword>
<keyword id="KW-0808">Transferase</keyword>
<evidence type="ECO:0000255" key="1">
    <source>
        <dbReference type="HAMAP-Rule" id="MF_01249"/>
    </source>
</evidence>
<organism>
    <name type="scientific">Geobacter sulfurreducens (strain ATCC 51573 / DSM 12127 / PCA)</name>
    <dbReference type="NCBI Taxonomy" id="243231"/>
    <lineage>
        <taxon>Bacteria</taxon>
        <taxon>Pseudomonadati</taxon>
        <taxon>Thermodesulfobacteriota</taxon>
        <taxon>Desulfuromonadia</taxon>
        <taxon>Geobacterales</taxon>
        <taxon>Geobacteraceae</taxon>
        <taxon>Geobacter</taxon>
    </lineage>
</organism>
<gene>
    <name evidence="1" type="primary">hprK</name>
    <name type="ordered locus">GSU1885</name>
</gene>
<comment type="function">
    <text evidence="1">Catalyzes the ATP- as well as the pyrophosphate-dependent phosphorylation of a specific serine residue in HPr, a phosphocarrier protein of the phosphoenolpyruvate-dependent sugar phosphotransferase system (PTS). HprK/P also catalyzes the pyrophosphate-producing, inorganic phosphate-dependent dephosphorylation (phosphorolysis) of seryl-phosphorylated HPr (P-Ser-HPr).</text>
</comment>
<comment type="catalytic activity">
    <reaction evidence="1">
        <text>[HPr protein]-L-serine + ATP = [HPr protein]-O-phospho-L-serine + ADP + H(+)</text>
        <dbReference type="Rhea" id="RHEA:46600"/>
        <dbReference type="Rhea" id="RHEA-COMP:11602"/>
        <dbReference type="Rhea" id="RHEA-COMP:11603"/>
        <dbReference type="ChEBI" id="CHEBI:15378"/>
        <dbReference type="ChEBI" id="CHEBI:29999"/>
        <dbReference type="ChEBI" id="CHEBI:30616"/>
        <dbReference type="ChEBI" id="CHEBI:83421"/>
        <dbReference type="ChEBI" id="CHEBI:456216"/>
    </reaction>
</comment>
<comment type="catalytic activity">
    <reaction evidence="1">
        <text>[HPr protein]-O-phospho-L-serine + phosphate + H(+) = [HPr protein]-L-serine + diphosphate</text>
        <dbReference type="Rhea" id="RHEA:46604"/>
        <dbReference type="Rhea" id="RHEA-COMP:11602"/>
        <dbReference type="Rhea" id="RHEA-COMP:11603"/>
        <dbReference type="ChEBI" id="CHEBI:15378"/>
        <dbReference type="ChEBI" id="CHEBI:29999"/>
        <dbReference type="ChEBI" id="CHEBI:33019"/>
        <dbReference type="ChEBI" id="CHEBI:43474"/>
        <dbReference type="ChEBI" id="CHEBI:83421"/>
    </reaction>
</comment>
<comment type="cofactor">
    <cofactor evidence="1">
        <name>Mg(2+)</name>
        <dbReference type="ChEBI" id="CHEBI:18420"/>
    </cofactor>
</comment>
<comment type="subunit">
    <text evidence="1">Homohexamer.</text>
</comment>
<comment type="domain">
    <text evidence="1">The Walker A ATP-binding motif also binds Pi and PPi.</text>
</comment>
<comment type="miscellaneous">
    <text evidence="1">Both phosphorylation and phosphorolysis are carried out by the same active site and suggest a common mechanism for both reactions.</text>
</comment>
<comment type="similarity">
    <text evidence="1">Belongs to the HPrK/P family.</text>
</comment>
<sequence>MNSISLAIQDLLDDTEYGLELVLLAGGAGVGHRIHSSRIQKPGLALTGYTEHLHPDRVQVLGNTEISYLQQISEQQALIHIQKLCSYPISCFIVTKGLDPPGFLKAEAERAGIPLLVTPHQSSTFISLITKFLEERLLPTTHIHGVLVDVLGVGVLILGKSGIGKSECALDLVIRGHRLVADDVVYVKKKMPAALVGQAAEAIQHHMEIRGLGVINIKNLFGVSSIREKKIIDMVIELVDWDPVQEYDRLGLDDEVYAILDVELPHIKIPVRPGRNLTSIIEVAARNHLLKGMGYHSAREFHEKLLARMEVRPLGNEVE</sequence>
<protein>
    <recommendedName>
        <fullName evidence="1">HPr kinase/phosphorylase</fullName>
        <shortName evidence="1">HPrK/P</shortName>
        <ecNumber evidence="1">2.7.11.-</ecNumber>
        <ecNumber evidence="1">2.7.4.-</ecNumber>
    </recommendedName>
    <alternativeName>
        <fullName evidence="1">HPr(Ser) kinase/phosphorylase</fullName>
    </alternativeName>
</protein>
<accession>P61323</accession>
<feature type="chain" id="PRO_0000058957" description="HPr kinase/phosphorylase">
    <location>
        <begin position="1"/>
        <end position="319"/>
    </location>
</feature>
<feature type="region of interest" description="Important for the catalytic mechanism of both phosphorylation and dephosphorylation" evidence="1">
    <location>
        <begin position="207"/>
        <end position="216"/>
    </location>
</feature>
<feature type="region of interest" description="Important for the catalytic mechanism of dephosphorylation" evidence="1">
    <location>
        <begin position="270"/>
        <end position="275"/>
    </location>
</feature>
<feature type="active site" evidence="1">
    <location>
        <position position="144"/>
    </location>
</feature>
<feature type="active site" evidence="1">
    <location>
        <position position="165"/>
    </location>
</feature>
<feature type="active site" description="Proton acceptor; for phosphorylation activity. Proton donor; for dephosphorylation activity" evidence="1">
    <location>
        <position position="183"/>
    </location>
</feature>
<feature type="active site" evidence="1">
    <location>
        <position position="249"/>
    </location>
</feature>
<feature type="binding site" evidence="1">
    <location>
        <begin position="159"/>
        <end position="166"/>
    </location>
    <ligand>
        <name>ATP</name>
        <dbReference type="ChEBI" id="CHEBI:30616"/>
    </ligand>
</feature>
<feature type="binding site" evidence="1">
    <location>
        <position position="166"/>
    </location>
    <ligand>
        <name>Mg(2+)</name>
        <dbReference type="ChEBI" id="CHEBI:18420"/>
    </ligand>
</feature>
<feature type="binding site" evidence="1">
    <location>
        <position position="208"/>
    </location>
    <ligand>
        <name>Mg(2+)</name>
        <dbReference type="ChEBI" id="CHEBI:18420"/>
    </ligand>
</feature>
<proteinExistence type="inferred from homology"/>
<reference key="1">
    <citation type="journal article" date="2003" name="Science">
        <title>Genome of Geobacter sulfurreducens: metal reduction in subsurface environments.</title>
        <authorList>
            <person name="Methe B.A."/>
            <person name="Nelson K.E."/>
            <person name="Eisen J.A."/>
            <person name="Paulsen I.T."/>
            <person name="Nelson W.C."/>
            <person name="Heidelberg J.F."/>
            <person name="Wu D."/>
            <person name="Wu M."/>
            <person name="Ward N.L."/>
            <person name="Beanan M.J."/>
            <person name="Dodson R.J."/>
            <person name="Madupu R."/>
            <person name="Brinkac L.M."/>
            <person name="Daugherty S.C."/>
            <person name="DeBoy R.T."/>
            <person name="Durkin A.S."/>
            <person name="Gwinn M.L."/>
            <person name="Kolonay J.F."/>
            <person name="Sullivan S.A."/>
            <person name="Haft D.H."/>
            <person name="Selengut J."/>
            <person name="Davidsen T.M."/>
            <person name="Zafar N."/>
            <person name="White O."/>
            <person name="Tran B."/>
            <person name="Romero C."/>
            <person name="Forberger H.A."/>
            <person name="Weidman J.F."/>
            <person name="Khouri H.M."/>
            <person name="Feldblyum T.V."/>
            <person name="Utterback T.R."/>
            <person name="Van Aken S.E."/>
            <person name="Lovley D.R."/>
            <person name="Fraser C.M."/>
        </authorList>
    </citation>
    <scope>NUCLEOTIDE SEQUENCE [LARGE SCALE GENOMIC DNA]</scope>
    <source>
        <strain>ATCC 51573 / DSM 12127 / PCA</strain>
    </source>
</reference>
<name>HPRK_GEOSL</name>